<protein>
    <recommendedName>
        <fullName evidence="1">1,4-alpha-glucan branching enzyme GlgB 1</fullName>
        <ecNumber evidence="1">2.4.1.18</ecNumber>
    </recommendedName>
    <alternativeName>
        <fullName evidence="1">1,4-alpha-D-glucan:1,4-alpha-D-glucan 6-glucosyl-transferase 1</fullName>
    </alternativeName>
    <alternativeName>
        <fullName evidence="1">Alpha-(1-&gt;4)-glucan branching enzyme 1</fullName>
    </alternativeName>
    <alternativeName>
        <fullName evidence="1">Glycogen branching enzyme 1</fullName>
        <shortName evidence="1">BE 1</shortName>
    </alternativeName>
</protein>
<dbReference type="EC" id="2.4.1.18" evidence="1"/>
<dbReference type="EMBL" id="AM039952">
    <property type="protein sequence ID" value="CAJ21772.1"/>
    <property type="molecule type" value="Genomic_DNA"/>
</dbReference>
<dbReference type="SMR" id="Q3BZE1"/>
<dbReference type="STRING" id="456327.BJD11_22230"/>
<dbReference type="CAZy" id="CBM48">
    <property type="family name" value="Carbohydrate-Binding Module Family 48"/>
</dbReference>
<dbReference type="CAZy" id="GH13">
    <property type="family name" value="Glycoside Hydrolase Family 13"/>
</dbReference>
<dbReference type="KEGG" id="xcv:XCV0141"/>
<dbReference type="eggNOG" id="COG0296">
    <property type="taxonomic scope" value="Bacteria"/>
</dbReference>
<dbReference type="HOGENOM" id="CLU_004245_3_2_6"/>
<dbReference type="UniPathway" id="UPA00164"/>
<dbReference type="Proteomes" id="UP000007069">
    <property type="component" value="Chromosome"/>
</dbReference>
<dbReference type="GO" id="GO:0005829">
    <property type="term" value="C:cytosol"/>
    <property type="evidence" value="ECO:0007669"/>
    <property type="project" value="TreeGrafter"/>
</dbReference>
<dbReference type="GO" id="GO:0003844">
    <property type="term" value="F:1,4-alpha-glucan branching enzyme activity"/>
    <property type="evidence" value="ECO:0007669"/>
    <property type="project" value="UniProtKB-UniRule"/>
</dbReference>
<dbReference type="GO" id="GO:0043169">
    <property type="term" value="F:cation binding"/>
    <property type="evidence" value="ECO:0007669"/>
    <property type="project" value="InterPro"/>
</dbReference>
<dbReference type="GO" id="GO:0004553">
    <property type="term" value="F:hydrolase activity, hydrolyzing O-glycosyl compounds"/>
    <property type="evidence" value="ECO:0007669"/>
    <property type="project" value="InterPro"/>
</dbReference>
<dbReference type="GO" id="GO:0005978">
    <property type="term" value="P:glycogen biosynthetic process"/>
    <property type="evidence" value="ECO:0007669"/>
    <property type="project" value="UniProtKB-UniRule"/>
</dbReference>
<dbReference type="CDD" id="cd11322">
    <property type="entry name" value="AmyAc_Glg_BE"/>
    <property type="match status" value="1"/>
</dbReference>
<dbReference type="CDD" id="cd02855">
    <property type="entry name" value="E_set_GBE_prok_N"/>
    <property type="match status" value="1"/>
</dbReference>
<dbReference type="FunFam" id="2.60.40.10:FF:000169">
    <property type="entry name" value="1,4-alpha-glucan branching enzyme GlgB"/>
    <property type="match status" value="1"/>
</dbReference>
<dbReference type="FunFam" id="2.60.40.1180:FF:000002">
    <property type="entry name" value="1,4-alpha-glucan branching enzyme GlgB"/>
    <property type="match status" value="1"/>
</dbReference>
<dbReference type="FunFam" id="3.20.20.80:FF:000003">
    <property type="entry name" value="1,4-alpha-glucan branching enzyme GlgB"/>
    <property type="match status" value="1"/>
</dbReference>
<dbReference type="Gene3D" id="3.20.20.80">
    <property type="entry name" value="Glycosidases"/>
    <property type="match status" value="1"/>
</dbReference>
<dbReference type="Gene3D" id="2.60.40.1180">
    <property type="entry name" value="Golgi alpha-mannosidase II"/>
    <property type="match status" value="1"/>
</dbReference>
<dbReference type="Gene3D" id="2.60.40.10">
    <property type="entry name" value="Immunoglobulins"/>
    <property type="match status" value="2"/>
</dbReference>
<dbReference type="HAMAP" id="MF_00685">
    <property type="entry name" value="GlgB"/>
    <property type="match status" value="1"/>
</dbReference>
<dbReference type="InterPro" id="IPR006048">
    <property type="entry name" value="A-amylase/branching_C"/>
</dbReference>
<dbReference type="InterPro" id="IPR037439">
    <property type="entry name" value="Branching_enzy"/>
</dbReference>
<dbReference type="InterPro" id="IPR006407">
    <property type="entry name" value="GlgB"/>
</dbReference>
<dbReference type="InterPro" id="IPR054169">
    <property type="entry name" value="GlgB_N"/>
</dbReference>
<dbReference type="InterPro" id="IPR044143">
    <property type="entry name" value="GlgB_N_E_set_prok"/>
</dbReference>
<dbReference type="InterPro" id="IPR006047">
    <property type="entry name" value="Glyco_hydro_13_cat_dom"/>
</dbReference>
<dbReference type="InterPro" id="IPR004193">
    <property type="entry name" value="Glyco_hydro_13_N"/>
</dbReference>
<dbReference type="InterPro" id="IPR013780">
    <property type="entry name" value="Glyco_hydro_b"/>
</dbReference>
<dbReference type="InterPro" id="IPR017853">
    <property type="entry name" value="Glycoside_hydrolase_SF"/>
</dbReference>
<dbReference type="InterPro" id="IPR013783">
    <property type="entry name" value="Ig-like_fold"/>
</dbReference>
<dbReference type="InterPro" id="IPR014756">
    <property type="entry name" value="Ig_E-set"/>
</dbReference>
<dbReference type="NCBIfam" id="TIGR01515">
    <property type="entry name" value="branching_enzym"/>
    <property type="match status" value="1"/>
</dbReference>
<dbReference type="NCBIfam" id="NF003811">
    <property type="entry name" value="PRK05402.1"/>
    <property type="match status" value="1"/>
</dbReference>
<dbReference type="NCBIfam" id="NF008967">
    <property type="entry name" value="PRK12313.1"/>
    <property type="match status" value="1"/>
</dbReference>
<dbReference type="PANTHER" id="PTHR43651">
    <property type="entry name" value="1,4-ALPHA-GLUCAN-BRANCHING ENZYME"/>
    <property type="match status" value="1"/>
</dbReference>
<dbReference type="PANTHER" id="PTHR43651:SF3">
    <property type="entry name" value="1,4-ALPHA-GLUCAN-BRANCHING ENZYME"/>
    <property type="match status" value="1"/>
</dbReference>
<dbReference type="Pfam" id="PF00128">
    <property type="entry name" value="Alpha-amylase"/>
    <property type="match status" value="1"/>
</dbReference>
<dbReference type="Pfam" id="PF02806">
    <property type="entry name" value="Alpha-amylase_C"/>
    <property type="match status" value="1"/>
</dbReference>
<dbReference type="Pfam" id="PF02922">
    <property type="entry name" value="CBM_48"/>
    <property type="match status" value="1"/>
</dbReference>
<dbReference type="Pfam" id="PF22019">
    <property type="entry name" value="GlgB_N"/>
    <property type="match status" value="1"/>
</dbReference>
<dbReference type="PIRSF" id="PIRSF000463">
    <property type="entry name" value="GlgB"/>
    <property type="match status" value="1"/>
</dbReference>
<dbReference type="SMART" id="SM00642">
    <property type="entry name" value="Aamy"/>
    <property type="match status" value="1"/>
</dbReference>
<dbReference type="SUPFAM" id="SSF51445">
    <property type="entry name" value="(Trans)glycosidases"/>
    <property type="match status" value="1"/>
</dbReference>
<dbReference type="SUPFAM" id="SSF81296">
    <property type="entry name" value="E set domains"/>
    <property type="match status" value="1"/>
</dbReference>
<dbReference type="SUPFAM" id="SSF51011">
    <property type="entry name" value="Glycosyl hydrolase domain"/>
    <property type="match status" value="1"/>
</dbReference>
<organism>
    <name type="scientific">Xanthomonas euvesicatoria pv. vesicatoria (strain 85-10)</name>
    <name type="common">Xanthomonas campestris pv. vesicatoria</name>
    <dbReference type="NCBI Taxonomy" id="316273"/>
    <lineage>
        <taxon>Bacteria</taxon>
        <taxon>Pseudomonadati</taxon>
        <taxon>Pseudomonadota</taxon>
        <taxon>Gammaproteobacteria</taxon>
        <taxon>Lysobacterales</taxon>
        <taxon>Lysobacteraceae</taxon>
        <taxon>Xanthomonas</taxon>
    </lineage>
</organism>
<sequence>MMSGVMTAVSNRWDPGAVRALAEARHGDAFAVLGAHPSDNGRFLRTYLPGADRVSAVLDDGQVVALDAGPEPGLFAGELPAHGGYRLRIGWPGGEQETADPYAFGPQLSDFDLHLISEGHHLQLADALGANVVEVDGVRGTRFAVWAPNASRVAVVGDFNSWDARRHPMRLRHQAGVWELFVPDVGPGAHYKYQLRGPHGHELPAKADPVARRAELAPGTASIVADPTPHQWSDDGWMATRARRQAHDAPMSIYEIHAGSWLREAGLDLDWDGLADRLIPYVADMGFTHVELMPVSEHPFGGSWGYQPLGLFAPTARFGTPDGFARFVDRCHREGIGVIVDWVPAHFPTDAHGLAHFDGTALYEHADPREGFHRDWNTLIYNHGRREVSGFLIASAMEFLQRYHVDGLRVDAVASMLYRDYSRNAGEWIPNIHGGRENYETIAFLRRLNEVVREHTPGAVMIAEESTAFPGVTADVAHGGLGFHYKWNMGWMHDTLHYAGLDPIYRRYHHGELTFSMVYAYSERFVLPISHDEVVHGKGSLLGRMPGDDWQRFANLRAYLGFMFTHPGRKLLFMGCEFGQPTEWNHDAGLPWHLLDDPRHRGVQTLVRDLNRLYVQYPALHAHDDDPSGFAWVVGDDAGNSVVAFLRKGKRGDAPVLVVINFTPVVQHGYRIGVPQGGQWREVFNSDAGIYGGSNLGNGGSVTAEQQSMHGHAQSLPLLLPPLGAIVLTPYG</sequence>
<evidence type="ECO:0000255" key="1">
    <source>
        <dbReference type="HAMAP-Rule" id="MF_00685"/>
    </source>
</evidence>
<accession>Q3BZE1</accession>
<keyword id="KW-0119">Carbohydrate metabolism</keyword>
<keyword id="KW-0320">Glycogen biosynthesis</keyword>
<keyword id="KW-0321">Glycogen metabolism</keyword>
<keyword id="KW-0328">Glycosyltransferase</keyword>
<keyword id="KW-0808">Transferase</keyword>
<feature type="chain" id="PRO_0000260716" description="1,4-alpha-glucan branching enzyme GlgB 1">
    <location>
        <begin position="1"/>
        <end position="732"/>
    </location>
</feature>
<feature type="active site" description="Nucleophile" evidence="1">
    <location>
        <position position="411"/>
    </location>
</feature>
<feature type="active site" description="Proton donor" evidence="1">
    <location>
        <position position="464"/>
    </location>
</feature>
<reference key="1">
    <citation type="journal article" date="2005" name="J. Bacteriol.">
        <title>Insights into genome plasticity and pathogenicity of the plant pathogenic Bacterium Xanthomonas campestris pv. vesicatoria revealed by the complete genome sequence.</title>
        <authorList>
            <person name="Thieme F."/>
            <person name="Koebnik R."/>
            <person name="Bekel T."/>
            <person name="Berger C."/>
            <person name="Boch J."/>
            <person name="Buettner D."/>
            <person name="Caldana C."/>
            <person name="Gaigalat L."/>
            <person name="Goesmann A."/>
            <person name="Kay S."/>
            <person name="Kirchner O."/>
            <person name="Lanz C."/>
            <person name="Linke B."/>
            <person name="McHardy A.C."/>
            <person name="Meyer F."/>
            <person name="Mittenhuber G."/>
            <person name="Nies D.H."/>
            <person name="Niesbach-Kloesgen U."/>
            <person name="Patschkowski T."/>
            <person name="Rueckert C."/>
            <person name="Rupp O."/>
            <person name="Schneiker S."/>
            <person name="Schuster S.C."/>
            <person name="Vorhoelter F.J."/>
            <person name="Weber E."/>
            <person name="Puehler A."/>
            <person name="Bonas U."/>
            <person name="Bartels D."/>
            <person name="Kaiser O."/>
        </authorList>
    </citation>
    <scope>NUCLEOTIDE SEQUENCE [LARGE SCALE GENOMIC DNA]</scope>
    <source>
        <strain>85-10</strain>
    </source>
</reference>
<name>GLGB1_XANE5</name>
<gene>
    <name evidence="1" type="primary">glgB1</name>
    <name type="ordered locus">XCV0141</name>
</gene>
<comment type="function">
    <text evidence="1">Catalyzes the formation of the alpha-1,6-glucosidic linkages in glycogen by scission of a 1,4-alpha-linked oligosaccharide from growing alpha-1,4-glucan chains and the subsequent attachment of the oligosaccharide to the alpha-1,6 position.</text>
</comment>
<comment type="catalytic activity">
    <reaction evidence="1">
        <text>Transfers a segment of a (1-&gt;4)-alpha-D-glucan chain to a primary hydroxy group in a similar glucan chain.</text>
        <dbReference type="EC" id="2.4.1.18"/>
    </reaction>
</comment>
<comment type="pathway">
    <text evidence="1">Glycan biosynthesis; glycogen biosynthesis.</text>
</comment>
<comment type="subunit">
    <text evidence="1">Monomer.</text>
</comment>
<comment type="similarity">
    <text evidence="1">Belongs to the glycosyl hydrolase 13 family. GlgB subfamily.</text>
</comment>
<proteinExistence type="inferred from homology"/>